<feature type="transit peptide" description="Mitochondrion" evidence="6">
    <location>
        <begin position="1"/>
        <end position="33"/>
    </location>
</feature>
<feature type="chain" id="PRO_0000030460" description="Large ribosomal subunit protein bL12m">
    <location>
        <begin position="34"/>
        <end position="194"/>
    </location>
</feature>
<feature type="region of interest" description="Disordered" evidence="2">
    <location>
        <begin position="101"/>
        <end position="120"/>
    </location>
</feature>
<feature type="compositionally biased region" description="Low complexity" evidence="2">
    <location>
        <begin position="105"/>
        <end position="114"/>
    </location>
</feature>
<feature type="glycosylation site" description="N-linked (GlcNAc...) asparagine" evidence="1">
    <location>
        <position position="34"/>
    </location>
</feature>
<feature type="sequence conflict" description="In Ref. 4; AA sequence." evidence="11" ref="4">
    <original>N</original>
    <variation>D</variation>
    <location>
        <position position="34"/>
    </location>
</feature>
<protein>
    <recommendedName>
        <fullName evidence="10">Large ribosomal subunit protein bL12m</fullName>
    </recommendedName>
    <alternativeName>
        <fullName>54S ribosomal protein L12, mitochondrial</fullName>
    </alternativeName>
    <alternativeName>
        <fullName>Mitochondrial-nucleoid protein 1</fullName>
    </alternativeName>
</protein>
<organism>
    <name type="scientific">Saccharomyces cerevisiae (strain ATCC 204508 / S288c)</name>
    <name type="common">Baker's yeast</name>
    <dbReference type="NCBI Taxonomy" id="559292"/>
    <lineage>
        <taxon>Eukaryota</taxon>
        <taxon>Fungi</taxon>
        <taxon>Dikarya</taxon>
        <taxon>Ascomycota</taxon>
        <taxon>Saccharomycotina</taxon>
        <taxon>Saccharomycetes</taxon>
        <taxon>Saccharomycetales</taxon>
        <taxon>Saccharomycetaceae</taxon>
        <taxon>Saccharomyces</taxon>
    </lineage>
</organism>
<reference key="1">
    <citation type="journal article" date="1997" name="Yeast">
        <title>Sequence analysis of 203 kilobases from Saccharomyces cerevisiae chromosome VII.</title>
        <authorList>
            <person name="Rieger M."/>
            <person name="Brueckner M."/>
            <person name="Schaefer M."/>
            <person name="Mueller-Auer S."/>
        </authorList>
    </citation>
    <scope>NUCLEOTIDE SEQUENCE [GENOMIC DNA]</scope>
    <source>
        <strain>ATCC 204508 / S288c</strain>
    </source>
</reference>
<reference key="2">
    <citation type="journal article" date="1997" name="Nature">
        <title>The nucleotide sequence of Saccharomyces cerevisiae chromosome VII.</title>
        <authorList>
            <person name="Tettelin H."/>
            <person name="Agostoni-Carbone M.L."/>
            <person name="Albermann K."/>
            <person name="Albers M."/>
            <person name="Arroyo J."/>
            <person name="Backes U."/>
            <person name="Barreiros T."/>
            <person name="Bertani I."/>
            <person name="Bjourson A.J."/>
            <person name="Brueckner M."/>
            <person name="Bruschi C.V."/>
            <person name="Carignani G."/>
            <person name="Castagnoli L."/>
            <person name="Cerdan E."/>
            <person name="Clemente M.L."/>
            <person name="Coblenz A."/>
            <person name="Coglievina M."/>
            <person name="Coissac E."/>
            <person name="Defoor E."/>
            <person name="Del Bino S."/>
            <person name="Delius H."/>
            <person name="Delneri D."/>
            <person name="de Wergifosse P."/>
            <person name="Dujon B."/>
            <person name="Durand P."/>
            <person name="Entian K.-D."/>
            <person name="Eraso P."/>
            <person name="Escribano V."/>
            <person name="Fabiani L."/>
            <person name="Fartmann B."/>
            <person name="Feroli F."/>
            <person name="Feuermann M."/>
            <person name="Frontali L."/>
            <person name="Garcia-Gonzalez M."/>
            <person name="Garcia-Saez M.I."/>
            <person name="Goffeau A."/>
            <person name="Guerreiro P."/>
            <person name="Hani J."/>
            <person name="Hansen M."/>
            <person name="Hebling U."/>
            <person name="Hernandez K."/>
            <person name="Heumann K."/>
            <person name="Hilger F."/>
            <person name="Hofmann B."/>
            <person name="Indge K.J."/>
            <person name="James C.M."/>
            <person name="Klima R."/>
            <person name="Koetter P."/>
            <person name="Kramer B."/>
            <person name="Kramer W."/>
            <person name="Lauquin G."/>
            <person name="Leuther H."/>
            <person name="Louis E.J."/>
            <person name="Maillier E."/>
            <person name="Marconi A."/>
            <person name="Martegani E."/>
            <person name="Mazon M.J."/>
            <person name="Mazzoni C."/>
            <person name="McReynolds A.D.K."/>
            <person name="Melchioretto P."/>
            <person name="Mewes H.-W."/>
            <person name="Minenkova O."/>
            <person name="Mueller-Auer S."/>
            <person name="Nawrocki A."/>
            <person name="Netter P."/>
            <person name="Neu R."/>
            <person name="Nombela C."/>
            <person name="Oliver S.G."/>
            <person name="Panzeri L."/>
            <person name="Paoluzi S."/>
            <person name="Plevani P."/>
            <person name="Portetelle D."/>
            <person name="Portillo F."/>
            <person name="Potier S."/>
            <person name="Purnelle B."/>
            <person name="Rieger M."/>
            <person name="Riles L."/>
            <person name="Rinaldi T."/>
            <person name="Robben J."/>
            <person name="Rodrigues-Pousada C."/>
            <person name="Rodriguez-Belmonte E."/>
            <person name="Rodriguez-Torres A.M."/>
            <person name="Rose M."/>
            <person name="Ruzzi M."/>
            <person name="Saliola M."/>
            <person name="Sanchez-Perez M."/>
            <person name="Schaefer B."/>
            <person name="Schaefer M."/>
            <person name="Scharfe M."/>
            <person name="Schmidheini T."/>
            <person name="Schreer A."/>
            <person name="Skala J."/>
            <person name="Souciet J.-L."/>
            <person name="Steensma H.Y."/>
            <person name="Talla E."/>
            <person name="Thierry A."/>
            <person name="Vandenbol M."/>
            <person name="van der Aart Q.J.M."/>
            <person name="Van Dyck L."/>
            <person name="Vanoni M."/>
            <person name="Verhasselt P."/>
            <person name="Voet M."/>
            <person name="Volckaert G."/>
            <person name="Wambutt R."/>
            <person name="Watson M.D."/>
            <person name="Weber N."/>
            <person name="Wedler E."/>
            <person name="Wedler H."/>
            <person name="Wipfli P."/>
            <person name="Wolf K."/>
            <person name="Wright L.F."/>
            <person name="Zaccaria P."/>
            <person name="Zimmermann M."/>
            <person name="Zollner A."/>
            <person name="Kleine K."/>
        </authorList>
    </citation>
    <scope>NUCLEOTIDE SEQUENCE [LARGE SCALE GENOMIC DNA]</scope>
    <source>
        <strain>ATCC 204508 / S288c</strain>
    </source>
</reference>
<reference key="3">
    <citation type="journal article" date="2014" name="G3 (Bethesda)">
        <title>The reference genome sequence of Saccharomyces cerevisiae: Then and now.</title>
        <authorList>
            <person name="Engel S.R."/>
            <person name="Dietrich F.S."/>
            <person name="Fisk D.G."/>
            <person name="Binkley G."/>
            <person name="Balakrishnan R."/>
            <person name="Costanzo M.C."/>
            <person name="Dwight S.S."/>
            <person name="Hitz B.C."/>
            <person name="Karra K."/>
            <person name="Nash R.S."/>
            <person name="Weng S."/>
            <person name="Wong E.D."/>
            <person name="Lloyd P."/>
            <person name="Skrzypek M.S."/>
            <person name="Miyasato S.R."/>
            <person name="Simison M."/>
            <person name="Cherry J.M."/>
        </authorList>
    </citation>
    <scope>GENOME REANNOTATION</scope>
    <source>
        <strain>ATCC 204508 / S288c</strain>
    </source>
</reference>
<reference key="4">
    <citation type="journal article" date="2004" name="Protoplasma">
        <title>A 22 kDa protein specific for yeast mitochondrial nucleoids is an unidentified putative ribosomal protein encoded in open reading frame YGL068W.</title>
        <authorList>
            <person name="Sato H."/>
            <person name="Miyakawa I."/>
        </authorList>
    </citation>
    <scope>PROTEIN SEQUENCE OF 34-48</scope>
    <scope>SUBUNIT</scope>
    <scope>SUBCELLULAR LOCATION</scope>
</reference>
<reference key="5">
    <citation type="journal article" date="2003" name="Nature">
        <title>Global analysis of protein localization in budding yeast.</title>
        <authorList>
            <person name="Huh W.-K."/>
            <person name="Falvo J.V."/>
            <person name="Gerke L.C."/>
            <person name="Carroll A.S."/>
            <person name="Howson R.W."/>
            <person name="Weissman J.S."/>
            <person name="O'Shea E.K."/>
        </authorList>
    </citation>
    <scope>SUBCELLULAR LOCATION [LARGE SCALE ANALYSIS]</scope>
</reference>
<reference key="6">
    <citation type="journal article" date="2003" name="Nature">
        <title>Global analysis of protein expression in yeast.</title>
        <authorList>
            <person name="Ghaemmaghami S."/>
            <person name="Huh W.-K."/>
            <person name="Bower K."/>
            <person name="Howson R.W."/>
            <person name="Belle A."/>
            <person name="Dephoure N."/>
            <person name="O'Shea E.K."/>
            <person name="Weissman J.S."/>
        </authorList>
    </citation>
    <scope>LEVEL OF PROTEIN EXPRESSION [LARGE SCALE ANALYSIS]</scope>
</reference>
<reference key="7">
    <citation type="journal article" date="2003" name="Proc. Natl. Acad. Sci. U.S.A.">
        <title>The proteome of Saccharomyces cerevisiae mitochondria.</title>
        <authorList>
            <person name="Sickmann A."/>
            <person name="Reinders J."/>
            <person name="Wagner Y."/>
            <person name="Joppich C."/>
            <person name="Zahedi R.P."/>
            <person name="Meyer H.E."/>
            <person name="Schoenfisch B."/>
            <person name="Perschil I."/>
            <person name="Chacinska A."/>
            <person name="Guiard B."/>
            <person name="Rehling P."/>
            <person name="Pfanner N."/>
            <person name="Meisinger C."/>
        </authorList>
    </citation>
    <scope>SUBCELLULAR LOCATION [LARGE SCALE ANALYSIS]</scope>
    <source>
        <strain>ATCC 76625 / YPH499</strain>
    </source>
</reference>
<reference key="8">
    <citation type="journal article" date="2006" name="FEMS Microbiol. Lett.">
        <title>Identification and comparative analysis of the large subunit mitochondrial ribosomal proteins of Neurospora crassa.</title>
        <authorList>
            <person name="Gan X."/>
            <person name="Arita K."/>
            <person name="Isono S."/>
            <person name="Kitakawa M."/>
            <person name="Yoshino K."/>
            <person name="Yonezawa K."/>
            <person name="Kato A."/>
            <person name="Inoue H."/>
            <person name="Isono K."/>
        </authorList>
    </citation>
    <scope>SUBUNIT</scope>
</reference>
<reference key="9">
    <citation type="journal article" date="2009" name="Mol. Syst. Biol.">
        <title>Global analysis of the glycoproteome in Saccharomyces cerevisiae reveals new roles for protein glycosylation in eukaryotes.</title>
        <authorList>
            <person name="Kung L.A."/>
            <person name="Tao S.-C."/>
            <person name="Qian J."/>
            <person name="Smith M.G."/>
            <person name="Snyder M."/>
            <person name="Zhu H."/>
        </authorList>
    </citation>
    <scope>GLYCOSYLATION [LARGE SCALE ANALYSIS]</scope>
    <scope>SUBCELLULAR LOCATION</scope>
</reference>
<reference key="10">
    <citation type="journal article" date="2014" name="Science">
        <title>Structure of the yeast mitochondrial large ribosomal subunit.</title>
        <authorList>
            <person name="Amunts A."/>
            <person name="Brown A."/>
            <person name="Bai X.C."/>
            <person name="Llacer J.L."/>
            <person name="Hussain T."/>
            <person name="Emsley P."/>
            <person name="Long F."/>
            <person name="Murshudov G."/>
            <person name="Scheres S.H."/>
            <person name="Ramakrishnan V."/>
        </authorList>
    </citation>
    <scope>NOMENCLATURE</scope>
</reference>
<reference key="11">
    <citation type="journal article" date="2015" name="Nat. Commun.">
        <title>Organization of the mitochondrial translation machinery studied in situ by cryoelectron tomography.</title>
        <authorList>
            <person name="Pfeffer S."/>
            <person name="Woellhaf M.W."/>
            <person name="Herrmann J.M."/>
            <person name="Forster F."/>
        </authorList>
    </citation>
    <scope>SUBCELLULAR LOCATION</scope>
</reference>
<name>MNP1_YEAST</name>
<gene>
    <name type="primary">MNP1</name>
    <name type="synonym">MRPL12</name>
    <name type="ordered locus">YGL068W</name>
</gene>
<accession>P53163</accession>
<accession>D6VU73</accession>
<dbReference type="EMBL" id="Z72591">
    <property type="protein sequence ID" value="CAA96773.1"/>
    <property type="molecule type" value="Genomic_DNA"/>
</dbReference>
<dbReference type="EMBL" id="BK006941">
    <property type="protein sequence ID" value="DAA08034.1"/>
    <property type="molecule type" value="Genomic_DNA"/>
</dbReference>
<dbReference type="PIR" id="S64075">
    <property type="entry name" value="S64075"/>
</dbReference>
<dbReference type="RefSeq" id="NP_011447.1">
    <property type="nucleotide sequence ID" value="NM_001180933.1"/>
</dbReference>
<dbReference type="SMR" id="P53163"/>
<dbReference type="BioGRID" id="33179">
    <property type="interactions" value="138"/>
</dbReference>
<dbReference type="ComplexPortal" id="CPX-1602">
    <property type="entry name" value="54S mitochondrial large ribosomal subunit"/>
</dbReference>
<dbReference type="DIP" id="DIP-6428N"/>
<dbReference type="FunCoup" id="P53163">
    <property type="interactions" value="962"/>
</dbReference>
<dbReference type="IntAct" id="P53163">
    <property type="interactions" value="73"/>
</dbReference>
<dbReference type="MINT" id="P53163"/>
<dbReference type="STRING" id="4932.YGL068W"/>
<dbReference type="GlyCosmos" id="P53163">
    <property type="glycosylation" value="1 site, No reported glycans"/>
</dbReference>
<dbReference type="GlyGen" id="P53163">
    <property type="glycosylation" value="2 sites"/>
</dbReference>
<dbReference type="iPTMnet" id="P53163"/>
<dbReference type="PaxDb" id="4932-YGL068W"/>
<dbReference type="PeptideAtlas" id="P53163"/>
<dbReference type="EnsemblFungi" id="YGL068W_mRNA">
    <property type="protein sequence ID" value="YGL068W"/>
    <property type="gene ID" value="YGL068W"/>
</dbReference>
<dbReference type="GeneID" id="852811"/>
<dbReference type="KEGG" id="sce:YGL068W"/>
<dbReference type="AGR" id="SGD:S000003036"/>
<dbReference type="SGD" id="S000003036">
    <property type="gene designation" value="MNP1"/>
</dbReference>
<dbReference type="VEuPathDB" id="FungiDB:YGL068W"/>
<dbReference type="eggNOG" id="KOG1715">
    <property type="taxonomic scope" value="Eukaryota"/>
</dbReference>
<dbReference type="GeneTree" id="ENSGT00390000000190"/>
<dbReference type="HOGENOM" id="CLU_086499_0_1_1"/>
<dbReference type="InParanoid" id="P53163"/>
<dbReference type="OMA" id="LEDKWGV"/>
<dbReference type="OrthoDB" id="250175at2759"/>
<dbReference type="BioCyc" id="YEAST:G3O-30572-MONOMER"/>
<dbReference type="Reactome" id="R-SCE-9837999">
    <property type="pathway name" value="Mitochondrial protein degradation"/>
</dbReference>
<dbReference type="BioGRID-ORCS" id="852811">
    <property type="hits" value="0 hits in 10 CRISPR screens"/>
</dbReference>
<dbReference type="PRO" id="PR:P53163"/>
<dbReference type="Proteomes" id="UP000002311">
    <property type="component" value="Chromosome VII"/>
</dbReference>
<dbReference type="RNAct" id="P53163">
    <property type="molecule type" value="protein"/>
</dbReference>
<dbReference type="GO" id="GO:0005743">
    <property type="term" value="C:mitochondrial inner membrane"/>
    <property type="evidence" value="ECO:0000303"/>
    <property type="project" value="ComplexPortal"/>
</dbReference>
<dbReference type="GO" id="GO:0005762">
    <property type="term" value="C:mitochondrial large ribosomal subunit"/>
    <property type="evidence" value="ECO:0000314"/>
    <property type="project" value="SGD"/>
</dbReference>
<dbReference type="GO" id="GO:0042645">
    <property type="term" value="C:mitochondrial nucleoid"/>
    <property type="evidence" value="ECO:0000314"/>
    <property type="project" value="SGD"/>
</dbReference>
<dbReference type="GO" id="GO:0005739">
    <property type="term" value="C:mitochondrion"/>
    <property type="evidence" value="ECO:0007005"/>
    <property type="project" value="SGD"/>
</dbReference>
<dbReference type="GO" id="GO:0003729">
    <property type="term" value="F:mRNA binding"/>
    <property type="evidence" value="ECO:0000318"/>
    <property type="project" value="GO_Central"/>
</dbReference>
<dbReference type="GO" id="GO:0003735">
    <property type="term" value="F:structural constituent of ribosome"/>
    <property type="evidence" value="ECO:0000314"/>
    <property type="project" value="SGD"/>
</dbReference>
<dbReference type="GO" id="GO:0032543">
    <property type="term" value="P:mitochondrial translation"/>
    <property type="evidence" value="ECO:0000303"/>
    <property type="project" value="ComplexPortal"/>
</dbReference>
<dbReference type="GO" id="GO:0006412">
    <property type="term" value="P:translation"/>
    <property type="evidence" value="ECO:0000318"/>
    <property type="project" value="GO_Central"/>
</dbReference>
<dbReference type="CDD" id="cd00387">
    <property type="entry name" value="Ribosomal_L7_L12"/>
    <property type="match status" value="1"/>
</dbReference>
<dbReference type="FunFam" id="3.30.1390.10:FF:000001">
    <property type="entry name" value="50S ribosomal protein L7/L12"/>
    <property type="match status" value="1"/>
</dbReference>
<dbReference type="FunFam" id="1.20.5.710:FF:000013">
    <property type="entry name" value="54S ribosomal protein L12, mitochondrial"/>
    <property type="match status" value="1"/>
</dbReference>
<dbReference type="Gene3D" id="3.30.1390.10">
    <property type="match status" value="1"/>
</dbReference>
<dbReference type="Gene3D" id="1.20.5.710">
    <property type="entry name" value="Single helix bin"/>
    <property type="match status" value="1"/>
</dbReference>
<dbReference type="HAMAP" id="MF_00368">
    <property type="entry name" value="Ribosomal_bL12"/>
    <property type="match status" value="1"/>
</dbReference>
<dbReference type="InterPro" id="IPR000206">
    <property type="entry name" value="Ribosomal_bL12"/>
</dbReference>
<dbReference type="InterPro" id="IPR013823">
    <property type="entry name" value="Ribosomal_bL12_C"/>
</dbReference>
<dbReference type="InterPro" id="IPR014719">
    <property type="entry name" value="Ribosomal_bL12_C/ClpS-like"/>
</dbReference>
<dbReference type="InterPro" id="IPR008932">
    <property type="entry name" value="Ribosomal_bL12_oligo"/>
</dbReference>
<dbReference type="InterPro" id="IPR036235">
    <property type="entry name" value="Ribosomal_bL12_oligo_N_sf"/>
</dbReference>
<dbReference type="PANTHER" id="PTHR45987">
    <property type="entry name" value="39S RIBOSOMAL PROTEIN L12"/>
    <property type="match status" value="1"/>
</dbReference>
<dbReference type="PANTHER" id="PTHR45987:SF4">
    <property type="entry name" value="LARGE RIBOSOMAL SUBUNIT PROTEIN BL12M"/>
    <property type="match status" value="1"/>
</dbReference>
<dbReference type="Pfam" id="PF00542">
    <property type="entry name" value="Ribosomal_L12"/>
    <property type="match status" value="1"/>
</dbReference>
<dbReference type="Pfam" id="PF16320">
    <property type="entry name" value="Ribosomal_L12_N"/>
    <property type="match status" value="1"/>
</dbReference>
<dbReference type="SUPFAM" id="SSF54736">
    <property type="entry name" value="ClpS-like"/>
    <property type="match status" value="1"/>
</dbReference>
<dbReference type="SUPFAM" id="SSF48300">
    <property type="entry name" value="Ribosomal protein L7/12, oligomerisation (N-terminal) domain"/>
    <property type="match status" value="1"/>
</dbReference>
<proteinExistence type="evidence at protein level"/>
<sequence length="194" mass="20650">MSLRILAKRSSSIWMKTRVTPALISPITITTRFNSTTTTAPSHKDDVRPVDPKISKIVQDISQLTLLETSSLINELKTVLNIPEISMPMGGFMAGAAGAGAGNVPSSTGEAGSGAEEEAKPEAKTVFTVKLDSFDTKTKAKVIKEVKGLLGLSLVEAKKFVEAAPKVLKENVAKDDAEKIKKTLEDLGAKVSLE</sequence>
<evidence type="ECO:0000255" key="1"/>
<evidence type="ECO:0000256" key="2">
    <source>
        <dbReference type="SAM" id="MobiDB-lite"/>
    </source>
</evidence>
<evidence type="ECO:0000269" key="3">
    <source>
    </source>
</evidence>
<evidence type="ECO:0000269" key="4">
    <source>
    </source>
</evidence>
<evidence type="ECO:0000269" key="5">
    <source>
    </source>
</evidence>
<evidence type="ECO:0000269" key="6">
    <source>
    </source>
</evidence>
<evidence type="ECO:0000269" key="7">
    <source>
    </source>
</evidence>
<evidence type="ECO:0000269" key="8">
    <source>
    </source>
</evidence>
<evidence type="ECO:0000269" key="9">
    <source>
    </source>
</evidence>
<evidence type="ECO:0000303" key="10">
    <source>
    </source>
</evidence>
<evidence type="ECO:0000305" key="11"/>
<evidence type="ECO:0000305" key="12">
    <source>
    </source>
</evidence>
<evidence type="ECO:0000305" key="13">
    <source>
    </source>
</evidence>
<keyword id="KW-0903">Direct protein sequencing</keyword>
<keyword id="KW-0325">Glycoprotein</keyword>
<keyword id="KW-0496">Mitochondrion</keyword>
<keyword id="KW-1185">Reference proteome</keyword>
<keyword id="KW-0687">Ribonucleoprotein</keyword>
<keyword id="KW-0689">Ribosomal protein</keyword>
<keyword id="KW-0809">Transit peptide</keyword>
<comment type="function">
    <text evidence="12 13">Component of the mitochondrial ribosome (mitoribosome), a dedicated translation machinery responsible for the synthesis of mitochondrial genome-encoded proteins, including at least some of the essential transmembrane subunits of the mitochondrial respiratory chain. The mitoribosomes are attached to the mitochondrial inner membrane and translation products are cotranslationally integrated into the membrane.</text>
</comment>
<comment type="subunit">
    <text evidence="6 7 12">Component of the mitochondrial large ribosomal subunit (mt-LSU) (PubMed:15221522, PubMed:16451194). Mature yeast 74S mitochondrial ribosomes consist of a small (37S) and a large (54S) subunit. The 37S small subunit contains a 15S ribosomal RNA (15S mt-rRNA) and 34 different proteins. The 54S large subunit contains a 21S rRNA (21S mt-rRNA) and 46 different proteins (PubMed:24675956).</text>
</comment>
<comment type="subcellular location">
    <subcellularLocation>
        <location evidence="3 5 6 8">Mitochondrion</location>
    </subcellularLocation>
    <text evidence="9">Mitoribosomes are tethered to the mitochondrial inner membrane and spatially aligned with the membrane insertion machinery through two distinct membrane contact sites, formed by the 21S rRNA expansion segment 96-ES1 and the inner membrane protein MBA1.</text>
</comment>
<comment type="PTM">
    <text evidence="8">N-glycosylated.</text>
</comment>
<comment type="miscellaneous">
    <text evidence="4">Present with 6900 molecules/cell in log phase SD medium.</text>
</comment>
<comment type="similarity">
    <text evidence="11">Belongs to the bacterial ribosomal protein bL12 family.</text>
</comment>